<feature type="chain" id="PRO_0000270596" description="Histone H3-like centromeric protein CSE4">
    <location>
        <begin position="1"/>
        <end position="211"/>
    </location>
</feature>
<feature type="region of interest" description="Disordered" evidence="2">
    <location>
        <begin position="1"/>
        <end position="63"/>
    </location>
</feature>
<feature type="region of interest" description="H3-like">
    <location>
        <begin position="104"/>
        <end position="207"/>
    </location>
</feature>
<feature type="compositionally biased region" description="Low complexity" evidence="2">
    <location>
        <begin position="1"/>
        <end position="18"/>
    </location>
</feature>
<feature type="compositionally biased region" description="Basic and acidic residues" evidence="2">
    <location>
        <begin position="23"/>
        <end position="36"/>
    </location>
</feature>
<feature type="compositionally biased region" description="Low complexity" evidence="2">
    <location>
        <begin position="37"/>
        <end position="56"/>
    </location>
</feature>
<proteinExistence type="inferred from homology"/>
<reference key="1">
    <citation type="journal article" date="2004" name="Proc. Natl. Acad. Sci. U.S.A.">
        <title>The diploid genome sequence of Candida albicans.</title>
        <authorList>
            <person name="Jones T."/>
            <person name="Federspiel N.A."/>
            <person name="Chibana H."/>
            <person name="Dungan J."/>
            <person name="Kalman S."/>
            <person name="Magee B.B."/>
            <person name="Newport G."/>
            <person name="Thorstenson Y.R."/>
            <person name="Agabian N."/>
            <person name="Magee P.T."/>
            <person name="Davis R.W."/>
            <person name="Scherer S."/>
        </authorList>
    </citation>
    <scope>NUCLEOTIDE SEQUENCE [LARGE SCALE GENOMIC DNA]</scope>
    <source>
        <strain>SC5314 / ATCC MYA-2876</strain>
    </source>
</reference>
<reference key="2">
    <citation type="journal article" date="2007" name="Genome Biol.">
        <title>Assembly of the Candida albicans genome into sixteen supercontigs aligned on the eight chromosomes.</title>
        <authorList>
            <person name="van het Hoog M."/>
            <person name="Rast T.J."/>
            <person name="Martchenko M."/>
            <person name="Grindle S."/>
            <person name="Dignard D."/>
            <person name="Hogues H."/>
            <person name="Cuomo C."/>
            <person name="Berriman M."/>
            <person name="Scherer S."/>
            <person name="Magee B.B."/>
            <person name="Whiteway M."/>
            <person name="Chibana H."/>
            <person name="Nantel A."/>
            <person name="Magee P.T."/>
        </authorList>
    </citation>
    <scope>GENOME REANNOTATION</scope>
    <source>
        <strain>SC5314 / ATCC MYA-2876</strain>
    </source>
</reference>
<reference key="3">
    <citation type="journal article" date="2013" name="Genome Biol.">
        <title>Assembly of a phased diploid Candida albicans genome facilitates allele-specific measurements and provides a simple model for repeat and indel structure.</title>
        <authorList>
            <person name="Muzzey D."/>
            <person name="Schwartz K."/>
            <person name="Weissman J.S."/>
            <person name="Sherlock G."/>
        </authorList>
    </citation>
    <scope>NUCLEOTIDE SEQUENCE [LARGE SCALE GENOMIC DNA]</scope>
    <scope>GENOME REANNOTATION</scope>
    <source>
        <strain>SC5314 / ATCC MYA-2876</strain>
    </source>
</reference>
<sequence>MARLSGQSSGRQTGQGTSAEAIRQQREELRRQRELRLQQQQQAERQQQRQQYRTEQSPIVPAATSSSRYSQFGIYRNQPGDVVDTLASSLPRRTTTTRPEVNRTVPRVKKRYRPGTKALREIRQYQKSTDLLIRKLPFARLVREISLDFVGPSYGLRWQSNAILALQEASESFLIHLLEDTNLCAIHAKRVTIMQKDIQLARRIRGQSWIL</sequence>
<protein>
    <recommendedName>
        <fullName>Histone H3-like centromeric protein CSE4</fullName>
    </recommendedName>
    <alternativeName>
        <fullName>CENP-A homolog</fullName>
    </alternativeName>
    <alternativeName>
        <fullName evidence="3">CENPA homolog</fullName>
    </alternativeName>
</protein>
<organism>
    <name type="scientific">Candida albicans (strain SC5314 / ATCC MYA-2876)</name>
    <name type="common">Yeast</name>
    <dbReference type="NCBI Taxonomy" id="237561"/>
    <lineage>
        <taxon>Eukaryota</taxon>
        <taxon>Fungi</taxon>
        <taxon>Dikarya</taxon>
        <taxon>Ascomycota</taxon>
        <taxon>Saccharomycotina</taxon>
        <taxon>Pichiomycetes</taxon>
        <taxon>Debaryomycetaceae</taxon>
        <taxon>Candida/Lodderomyces clade</taxon>
        <taxon>Candida</taxon>
    </lineage>
</organism>
<comment type="function">
    <text evidence="1">Histone H3-like nucleosomal protein that is specifically found in centromeric nucleosomes. Replaces conventional H3 in the nucleosome core of centromeric chromatin that serves as an assembly site for the inner kinetochore. Required for recruitment and assembly of kinetochore proteins, mitotic progression and chromosome segregation. May serve as an epigenetic mark that propagates centromere identity through replication and cell division (By similarity).</text>
</comment>
<comment type="subunit">
    <text evidence="1">Component of centromeric nucleosomes, where DNA is wrapped around a histone octamer core. The octamer contains two molecules each of H2A, H2B, CSE4/CENPA and H4 assembled in one CSE4-H4 heterotetramer and two H2A-H2B heterodimers. Interacts with the inner kinetochore.</text>
</comment>
<comment type="subcellular location">
    <subcellularLocation>
        <location evidence="1">Nucleus</location>
    </subcellularLocation>
    <subcellularLocation>
        <location evidence="1">Chromosome</location>
        <location evidence="1">Centromere</location>
    </subcellularLocation>
</comment>
<comment type="PTM">
    <text evidence="1">Ubiquitinated. Is degraded through ubiquitin-mediated proteolysis when not protected by its association to the kinetochore.</text>
</comment>
<comment type="similarity">
    <text evidence="3">Belongs to the histone H3 family.</text>
</comment>
<keyword id="KW-0137">Centromere</keyword>
<keyword id="KW-0158">Chromosome</keyword>
<keyword id="KW-0238">DNA-binding</keyword>
<keyword id="KW-0544">Nucleosome core</keyword>
<keyword id="KW-0539">Nucleus</keyword>
<keyword id="KW-1185">Reference proteome</keyword>
<keyword id="KW-0832">Ubl conjugation</keyword>
<name>CENPA_CANAL</name>
<accession>Q59LN9</accession>
<accession>A0A1D8PJ32</accession>
<gene>
    <name type="primary">CSE4</name>
    <name type="ordered locus">CAALFM_C300860WA</name>
    <name type="ORF">CaO19.6163</name>
</gene>
<dbReference type="EMBL" id="CP017625">
    <property type="protein sequence ID" value="AOW28135.1"/>
    <property type="molecule type" value="Genomic_DNA"/>
</dbReference>
<dbReference type="RefSeq" id="XP_710644.1">
    <property type="nucleotide sequence ID" value="XM_705552.2"/>
</dbReference>
<dbReference type="SMR" id="Q59LN9"/>
<dbReference type="FunCoup" id="Q59LN9">
    <property type="interactions" value="346"/>
</dbReference>
<dbReference type="STRING" id="237561.Q59LN9"/>
<dbReference type="EnsemblFungi" id="C3_00860W_A-T">
    <property type="protein sequence ID" value="C3_00860W_A-T-p1"/>
    <property type="gene ID" value="C3_00860W_A"/>
</dbReference>
<dbReference type="GeneID" id="3647750"/>
<dbReference type="KEGG" id="cal:CAALFM_C300860WA"/>
<dbReference type="CGD" id="CAL0000183421">
    <property type="gene designation" value="CSE4"/>
</dbReference>
<dbReference type="VEuPathDB" id="FungiDB:C3_00860W_A"/>
<dbReference type="eggNOG" id="KOG1745">
    <property type="taxonomic scope" value="Eukaryota"/>
</dbReference>
<dbReference type="HOGENOM" id="CLU_078295_3_0_1"/>
<dbReference type="InParanoid" id="Q59LN9"/>
<dbReference type="OMA" id="WQSHAIM"/>
<dbReference type="OrthoDB" id="842664at2759"/>
<dbReference type="Proteomes" id="UP000000559">
    <property type="component" value="Chromosome 3"/>
</dbReference>
<dbReference type="GO" id="GO:0043505">
    <property type="term" value="C:CENP-A containing nucleosome"/>
    <property type="evidence" value="ECO:0000314"/>
    <property type="project" value="CGD"/>
</dbReference>
<dbReference type="GO" id="GO:0000775">
    <property type="term" value="C:chromosome, centromeric region"/>
    <property type="evidence" value="ECO:0000314"/>
    <property type="project" value="CGD"/>
</dbReference>
<dbReference type="GO" id="GO:0000776">
    <property type="term" value="C:kinetochore"/>
    <property type="evidence" value="ECO:0000314"/>
    <property type="project" value="CGD"/>
</dbReference>
<dbReference type="GO" id="GO:0005634">
    <property type="term" value="C:nucleus"/>
    <property type="evidence" value="ECO:0000314"/>
    <property type="project" value="UniProtKB"/>
</dbReference>
<dbReference type="GO" id="GO:0019237">
    <property type="term" value="F:centromeric DNA binding"/>
    <property type="evidence" value="ECO:0000314"/>
    <property type="project" value="CGD"/>
</dbReference>
<dbReference type="GO" id="GO:0046982">
    <property type="term" value="F:protein heterodimerization activity"/>
    <property type="evidence" value="ECO:0007669"/>
    <property type="project" value="InterPro"/>
</dbReference>
<dbReference type="GO" id="GO:0030527">
    <property type="term" value="F:structural constituent of chromatin"/>
    <property type="evidence" value="ECO:0007669"/>
    <property type="project" value="InterPro"/>
</dbReference>
<dbReference type="GO" id="GO:0000070">
    <property type="term" value="P:mitotic sister chromatid segregation"/>
    <property type="evidence" value="ECO:0000315"/>
    <property type="project" value="CGD"/>
</dbReference>
<dbReference type="CDD" id="cd22911">
    <property type="entry name" value="HFD_H3"/>
    <property type="match status" value="1"/>
</dbReference>
<dbReference type="FunFam" id="1.10.20.10:FF:000087">
    <property type="entry name" value="Probable histone 3"/>
    <property type="match status" value="1"/>
</dbReference>
<dbReference type="Gene3D" id="1.10.20.10">
    <property type="entry name" value="Histone, subunit A"/>
    <property type="match status" value="1"/>
</dbReference>
<dbReference type="InterPro" id="IPR009072">
    <property type="entry name" value="Histone-fold"/>
</dbReference>
<dbReference type="InterPro" id="IPR007125">
    <property type="entry name" value="Histone_H2A/H2B/H3"/>
</dbReference>
<dbReference type="InterPro" id="IPR000164">
    <property type="entry name" value="Histone_H3/CENP-A"/>
</dbReference>
<dbReference type="PANTHER" id="PTHR11426">
    <property type="entry name" value="HISTONE H3"/>
    <property type="match status" value="1"/>
</dbReference>
<dbReference type="Pfam" id="PF00125">
    <property type="entry name" value="Histone"/>
    <property type="match status" value="1"/>
</dbReference>
<dbReference type="PRINTS" id="PR00622">
    <property type="entry name" value="HISTONEH3"/>
</dbReference>
<dbReference type="SMART" id="SM00428">
    <property type="entry name" value="H3"/>
    <property type="match status" value="1"/>
</dbReference>
<dbReference type="SUPFAM" id="SSF47113">
    <property type="entry name" value="Histone-fold"/>
    <property type="match status" value="1"/>
</dbReference>
<dbReference type="PROSITE" id="PS00959">
    <property type="entry name" value="HISTONE_H3_2"/>
    <property type="match status" value="1"/>
</dbReference>
<evidence type="ECO:0000250" key="1">
    <source>
        <dbReference type="UniProtKB" id="P36012"/>
    </source>
</evidence>
<evidence type="ECO:0000256" key="2">
    <source>
        <dbReference type="SAM" id="MobiDB-lite"/>
    </source>
</evidence>
<evidence type="ECO:0000305" key="3"/>